<reference key="1">
    <citation type="submission" date="2007-06" db="EMBL/GenBank/DDBJ databases">
        <title>Complete sequence of Methanococcus vannielii SB.</title>
        <authorList>
            <consortium name="US DOE Joint Genome Institute"/>
            <person name="Copeland A."/>
            <person name="Lucas S."/>
            <person name="Lapidus A."/>
            <person name="Barry K."/>
            <person name="Glavina del Rio T."/>
            <person name="Dalin E."/>
            <person name="Tice H."/>
            <person name="Pitluck S."/>
            <person name="Chain P."/>
            <person name="Malfatti S."/>
            <person name="Shin M."/>
            <person name="Vergez L."/>
            <person name="Schmutz J."/>
            <person name="Larimer F."/>
            <person name="Land M."/>
            <person name="Hauser L."/>
            <person name="Kyrpides N."/>
            <person name="Anderson I."/>
            <person name="Sieprawska-Lupa M."/>
            <person name="Whitman W.B."/>
            <person name="Richardson P."/>
        </authorList>
    </citation>
    <scope>NUCLEOTIDE SEQUENCE [LARGE SCALE GENOMIC DNA]</scope>
    <source>
        <strain>ATCC 35089 / DSM 1224 / JCM 13029 / OCM 148 / SB</strain>
    </source>
</reference>
<accession>A6USH1</accession>
<protein>
    <recommendedName>
        <fullName evidence="1">UPF0285 protein Mevan_1551</fullName>
    </recommendedName>
</protein>
<sequence>MIVVGIDHGTSGITSCIMENGLIKSIFKIRRTEFEKLSFLDELKKHINLSEIDLIGVCYSMGDGINKITDISRVKNRGVRNLEGIGKKIGGGTKVYDEIKESKIPAVVIPGLHKGIDCMDKRFNALFSHTASPEKISICYNAYKTFNLENFILSDISSNTVTLLIRNGKIFGGFDACIGAVGILHGPIDLELIKKIDLREITANEAFSKAGAVKITDSYKGVEDTKSEIIEKYEKDEKCKLAVDSLVLSVSMEINSLMFLNPENNVVIAGSVGVCKNPDISKMIKENTNGNFFVLDGESGAIGSAMIANDILYGKKDILGISVDFNIE</sequence>
<comment type="similarity">
    <text evidence="1">Belongs to the UPF0285 family.</text>
</comment>
<gene>
    <name type="ordered locus">Mevan_1551</name>
</gene>
<organism>
    <name type="scientific">Methanococcus vannielii (strain ATCC 35089 / DSM 1224 / JCM 13029 / OCM 148 / SB)</name>
    <dbReference type="NCBI Taxonomy" id="406327"/>
    <lineage>
        <taxon>Archaea</taxon>
        <taxon>Methanobacteriati</taxon>
        <taxon>Methanobacteriota</taxon>
        <taxon>Methanomada group</taxon>
        <taxon>Methanococci</taxon>
        <taxon>Methanococcales</taxon>
        <taxon>Methanococcaceae</taxon>
        <taxon>Methanococcus</taxon>
    </lineage>
</organism>
<name>Y1551_METVS</name>
<dbReference type="EMBL" id="CP000742">
    <property type="protein sequence ID" value="ABR55443.1"/>
    <property type="molecule type" value="Genomic_DNA"/>
</dbReference>
<dbReference type="RefSeq" id="WP_012066357.1">
    <property type="nucleotide sequence ID" value="NC_009634.1"/>
</dbReference>
<dbReference type="SMR" id="A6USH1"/>
<dbReference type="STRING" id="406327.Mevan_1551"/>
<dbReference type="GeneID" id="5325970"/>
<dbReference type="KEGG" id="mvn:Mevan_1551"/>
<dbReference type="eggNOG" id="arCOG04885">
    <property type="taxonomic scope" value="Archaea"/>
</dbReference>
<dbReference type="HOGENOM" id="CLU_846254_0_0_2"/>
<dbReference type="OrthoDB" id="235676at2157"/>
<dbReference type="Proteomes" id="UP000001107">
    <property type="component" value="Chromosome"/>
</dbReference>
<dbReference type="HAMAP" id="MF_01087">
    <property type="entry name" value="UPF0285"/>
    <property type="match status" value="1"/>
</dbReference>
<dbReference type="InterPro" id="IPR043129">
    <property type="entry name" value="ATPase_NBD"/>
</dbReference>
<dbReference type="InterPro" id="IPR016735">
    <property type="entry name" value="Methan_mark_12"/>
</dbReference>
<dbReference type="NCBIfam" id="TIGR03281">
    <property type="entry name" value="methan_mark_12"/>
    <property type="match status" value="1"/>
</dbReference>
<dbReference type="PIRSF" id="PIRSF018783">
    <property type="entry name" value="UCP018783"/>
    <property type="match status" value="1"/>
</dbReference>
<dbReference type="SUPFAM" id="SSF53067">
    <property type="entry name" value="Actin-like ATPase domain"/>
    <property type="match status" value="1"/>
</dbReference>
<evidence type="ECO:0000255" key="1">
    <source>
        <dbReference type="HAMAP-Rule" id="MF_01087"/>
    </source>
</evidence>
<feature type="chain" id="PRO_1000149875" description="UPF0285 protein Mevan_1551">
    <location>
        <begin position="1"/>
        <end position="328"/>
    </location>
</feature>
<proteinExistence type="inferred from homology"/>